<keyword id="KW-1003">Cell membrane</keyword>
<keyword id="KW-0966">Cell projection</keyword>
<keyword id="KW-1015">Disulfide bond</keyword>
<keyword id="KW-0256">Endoplasmic reticulum</keyword>
<keyword id="KW-0325">Glycoprotein</keyword>
<keyword id="KW-0336">GPI-anchor</keyword>
<keyword id="KW-0449">Lipoprotein</keyword>
<keyword id="KW-0472">Membrane</keyword>
<keyword id="KW-1185">Reference proteome</keyword>
<keyword id="KW-0732">Signal</keyword>
<proteinExistence type="inferred from homology"/>
<sequence>MTPLLTLFLVALIGLPLAQALDCHVCAYNGDNCFNPMRCPAMVAYCMTTRTYYTPTRMKVSKSCVPSCFETVYDGYSKHASTTSCCQYDLCNGAGFAAPATLALAPILLATLWGLL</sequence>
<reference key="1">
    <citation type="journal article" date="2004" name="Cell">
        <title>Accelerated evolution of nervous system genes in the origin of Homo sapiens.</title>
        <authorList>
            <person name="Dorus S."/>
            <person name="Vallender E.J."/>
            <person name="Evans P.D."/>
            <person name="Anderson J.R."/>
            <person name="Gilbert S.L."/>
            <person name="Mahowald M."/>
            <person name="Wyckoff G.J."/>
            <person name="Malcom C.M."/>
            <person name="Lahn B.T."/>
        </authorList>
    </citation>
    <scope>NUCLEOTIDE SEQUENCE [MRNA]</scope>
</reference>
<accession>Q5IS87</accession>
<evidence type="ECO:0000250" key="1">
    <source>
        <dbReference type="UniProtKB" id="P0DP58"/>
    </source>
</evidence>
<evidence type="ECO:0000250" key="2">
    <source>
        <dbReference type="UniProtKB" id="P0DP60"/>
    </source>
</evidence>
<evidence type="ECO:0000250" key="3">
    <source>
        <dbReference type="UniProtKB" id="Q9BZG9"/>
    </source>
</evidence>
<evidence type="ECO:0000255" key="4"/>
<evidence type="ECO:0000305" key="5"/>
<comment type="function">
    <text evidence="1 2">Acts in different tissues through interaction to nicotinic acetylcholine receptors (nAChRs). The proposed role as modulator of nAChR activity seems to be dependent on the nAChR subtype and stoichiometry, and to involve an effect on nAChR trafficking and its cell surface expression, and on single channel properties of the nAChR inserted in the plasma membrane. Modulates functional properties of nicotinic acetylcholine receptors (nAChRs) to prevent excessive excitation, and hence neurodegeneration. Enhances desensitization by increasing both the rate and extent of desensitization of alpha-4:beta-2-containing nAChRs and slowing recovery from desensitization. Promotes large amplitude ACh-evoked currents through alpha-4:beta-2 nAChRs. Is involved in regulation of the nAChR pentameric assembly in the endoplasmic reticulum. Shifts stoichiometry from high sensitivity alpha-4(2):beta-2(3) to low sensitivity alpha-4(3):beta-2(2) nAChR. In vitro modulates alpha-3:beta-4-containing nAChRs. Reduces cell surface expression of (alpha-3:beta-4)(2):beta-4 and (alpha-3:beta-4)(2):alpha-5 nAChRs suggesting an interaction with nAChR alpha-3(-):(+)beta-4 subunit interfaces and an allosteric mode. Corresponding single channel effects characterized by decreased unitary conductance, altered burst proportions and enhanced desensitization/inactivation seem to depend on nAChR alpha:alpha subunit interfaces and are greater in (alpha-3:beta-2)(2):alpha-3 when compared to (alpha-3:beta-2)(2):alpha-5 nAChRs. Prevents plasticity in the primary visual cortex late in life.</text>
</comment>
<comment type="subunit">
    <text evidence="1 2">Interacts with nAChRs containing alpha-4:beta-2 (CHRNA4:CHRNB2) and alpha-7 (CHRNA7) subunits. Interacts with CHRNA4 probably in the endoplasmic reticulum prior to nAChR pentameric assembly (By similarity). Interacts with KCNA2/Potassium voltage-gated channel subfamily A member 2 (By similarity).</text>
</comment>
<comment type="subcellular location">
    <subcellularLocation>
        <location evidence="4">Cell membrane</location>
        <topology evidence="4">Lipid-anchor</topology>
        <topology evidence="4">GPI-anchor</topology>
    </subcellularLocation>
    <subcellularLocation>
        <location evidence="2">Cell projection</location>
        <location evidence="2">Dendrite</location>
    </subcellularLocation>
    <subcellularLocation>
        <location evidence="2">Endoplasmic reticulum</location>
    </subcellularLocation>
    <text evidence="2">Detected in Purkinje cells soma and proximal dendrites.</text>
</comment>
<name>LYNX1_SAIBB</name>
<organism>
    <name type="scientific">Saimiri boliviensis boliviensis</name>
    <name type="common">Bolivian squirrel monkey</name>
    <dbReference type="NCBI Taxonomy" id="39432"/>
    <lineage>
        <taxon>Eukaryota</taxon>
        <taxon>Metazoa</taxon>
        <taxon>Chordata</taxon>
        <taxon>Craniata</taxon>
        <taxon>Vertebrata</taxon>
        <taxon>Euteleostomi</taxon>
        <taxon>Mammalia</taxon>
        <taxon>Eutheria</taxon>
        <taxon>Euarchontoglires</taxon>
        <taxon>Primates</taxon>
        <taxon>Haplorrhini</taxon>
        <taxon>Platyrrhini</taxon>
        <taxon>Cebidae</taxon>
        <taxon>Saimiriinae</taxon>
        <taxon>Saimiri</taxon>
    </lineage>
</organism>
<protein>
    <recommendedName>
        <fullName evidence="5">Ly-6/neurotoxin-like protein 1</fullName>
    </recommendedName>
</protein>
<feature type="signal peptide" evidence="4">
    <location>
        <begin position="1"/>
        <end position="20"/>
    </location>
</feature>
<feature type="chain" id="PRO_0000043169" description="Ly-6/neurotoxin-like protein 1" evidence="4">
    <location>
        <begin position="21"/>
        <end position="92"/>
    </location>
</feature>
<feature type="propeptide" id="PRO_0000440645" description="Removed in mature form" evidence="4">
    <location>
        <begin position="93"/>
        <end position="116"/>
    </location>
</feature>
<feature type="domain" description="UPAR/Ly6" evidence="4">
    <location>
        <begin position="21"/>
        <end position="105"/>
    </location>
</feature>
<feature type="lipid moiety-binding region" description="GPI-anchor amidated asparagine" evidence="4">
    <location>
        <position position="92"/>
    </location>
</feature>
<feature type="disulfide bond" evidence="1">
    <location>
        <begin position="23"/>
        <end position="46"/>
    </location>
</feature>
<feature type="disulfide bond" evidence="1">
    <location>
        <begin position="26"/>
        <end position="33"/>
    </location>
</feature>
<feature type="disulfide bond" evidence="1">
    <location>
        <begin position="39"/>
        <end position="64"/>
    </location>
</feature>
<feature type="disulfide bond" evidence="1">
    <location>
        <begin position="68"/>
        <end position="85"/>
    </location>
</feature>
<feature type="disulfide bond" evidence="1">
    <location>
        <begin position="86"/>
        <end position="91"/>
    </location>
</feature>
<dbReference type="EMBL" id="AY665241">
    <property type="protein sequence ID" value="AAV74279.1"/>
    <property type="molecule type" value="mRNA"/>
</dbReference>
<dbReference type="RefSeq" id="NP_001266926.1">
    <property type="nucleotide sequence ID" value="NM_001279997.1"/>
</dbReference>
<dbReference type="RefSeq" id="XP_010328104.1">
    <property type="nucleotide sequence ID" value="XM_010329802.2"/>
</dbReference>
<dbReference type="RefSeq" id="XP_010328105.1">
    <property type="nucleotide sequence ID" value="XM_010329803.2"/>
</dbReference>
<dbReference type="BMRB" id="Q5IS87"/>
<dbReference type="SMR" id="Q5IS87"/>
<dbReference type="STRING" id="39432.ENSSBOP00000016309"/>
<dbReference type="Ensembl" id="ENSSBOT00000033114.1">
    <property type="protein sequence ID" value="ENSSBOP00000016309.1"/>
    <property type="gene ID" value="ENSSBOG00000024857.1"/>
</dbReference>
<dbReference type="GeneID" id="101034926"/>
<dbReference type="KEGG" id="sbq:101034926"/>
<dbReference type="CTD" id="66004"/>
<dbReference type="GeneTree" id="ENSGT00730000111571"/>
<dbReference type="OMA" id="YTPYRMK"/>
<dbReference type="Proteomes" id="UP000233220">
    <property type="component" value="Unplaced"/>
</dbReference>
<dbReference type="GO" id="GO:0030425">
    <property type="term" value="C:dendrite"/>
    <property type="evidence" value="ECO:0007669"/>
    <property type="project" value="UniProtKB-SubCell"/>
</dbReference>
<dbReference type="GO" id="GO:0005783">
    <property type="term" value="C:endoplasmic reticulum"/>
    <property type="evidence" value="ECO:0007669"/>
    <property type="project" value="UniProtKB-SubCell"/>
</dbReference>
<dbReference type="GO" id="GO:0005886">
    <property type="term" value="C:plasma membrane"/>
    <property type="evidence" value="ECO:0007669"/>
    <property type="project" value="UniProtKB-SubCell"/>
</dbReference>
<dbReference type="GO" id="GO:0098552">
    <property type="term" value="C:side of membrane"/>
    <property type="evidence" value="ECO:0007669"/>
    <property type="project" value="UniProtKB-KW"/>
</dbReference>
<dbReference type="GO" id="GO:0045202">
    <property type="term" value="C:synapse"/>
    <property type="evidence" value="ECO:0007669"/>
    <property type="project" value="GOC"/>
</dbReference>
<dbReference type="GO" id="GO:0033130">
    <property type="term" value="F:acetylcholine receptor binding"/>
    <property type="evidence" value="ECO:0000250"/>
    <property type="project" value="UniProtKB"/>
</dbReference>
<dbReference type="GO" id="GO:0030550">
    <property type="term" value="F:acetylcholine receptor inhibitor activity"/>
    <property type="evidence" value="ECO:0007669"/>
    <property type="project" value="Ensembl"/>
</dbReference>
<dbReference type="GO" id="GO:0030548">
    <property type="term" value="F:acetylcholine receptor regulator activity"/>
    <property type="evidence" value="ECO:0000250"/>
    <property type="project" value="UniProtKB"/>
</dbReference>
<dbReference type="GO" id="GO:0008200">
    <property type="term" value="F:ion channel inhibitor activity"/>
    <property type="evidence" value="ECO:0007669"/>
    <property type="project" value="Ensembl"/>
</dbReference>
<dbReference type="GO" id="GO:0099601">
    <property type="term" value="P:regulation of neurotransmitter receptor activity"/>
    <property type="evidence" value="ECO:0000250"/>
    <property type="project" value="UniProtKB"/>
</dbReference>
<dbReference type="GO" id="GO:0007271">
    <property type="term" value="P:synaptic transmission, cholinergic"/>
    <property type="evidence" value="ECO:0007669"/>
    <property type="project" value="Ensembl"/>
</dbReference>
<dbReference type="CDD" id="cd23585">
    <property type="entry name" value="TFP_LU_ECD_LYNX1"/>
    <property type="match status" value="1"/>
</dbReference>
<dbReference type="FunFam" id="2.10.60.10:FF:000003">
    <property type="entry name" value="lymphocyte antigen 6E isoform X1"/>
    <property type="match status" value="1"/>
</dbReference>
<dbReference type="Gene3D" id="2.10.60.10">
    <property type="entry name" value="CD59"/>
    <property type="match status" value="1"/>
</dbReference>
<dbReference type="InterPro" id="IPR051110">
    <property type="entry name" value="Ly-6/neurotoxin-like_GPI-ap"/>
</dbReference>
<dbReference type="InterPro" id="IPR016054">
    <property type="entry name" value="LY6_UPA_recep-like"/>
</dbReference>
<dbReference type="InterPro" id="IPR045860">
    <property type="entry name" value="Snake_toxin-like_sf"/>
</dbReference>
<dbReference type="InterPro" id="IPR035076">
    <property type="entry name" value="Toxin/TOLIP"/>
</dbReference>
<dbReference type="PANTHER" id="PTHR16983:SF27">
    <property type="entry name" value="LY-6_NEUROTOXIN-LIKE PROTEIN 1"/>
    <property type="match status" value="1"/>
</dbReference>
<dbReference type="PANTHER" id="PTHR16983">
    <property type="entry name" value="UPAR/LY6 DOMAIN-CONTAINING PROTEIN"/>
    <property type="match status" value="1"/>
</dbReference>
<dbReference type="Pfam" id="PF00087">
    <property type="entry name" value="Toxin_TOLIP"/>
    <property type="match status" value="1"/>
</dbReference>
<dbReference type="SMART" id="SM00134">
    <property type="entry name" value="LU"/>
    <property type="match status" value="1"/>
</dbReference>
<dbReference type="SUPFAM" id="SSF57302">
    <property type="entry name" value="Snake toxin-like"/>
    <property type="match status" value="1"/>
</dbReference>
<gene>
    <name evidence="3" type="primary">LYNX1</name>
</gene>